<reference key="1">
    <citation type="submission" date="2007-08" db="EMBL/GenBank/DDBJ databases">
        <title>Complete sequence of Shewanella sediminis HAW-EB3.</title>
        <authorList>
            <consortium name="US DOE Joint Genome Institute"/>
            <person name="Copeland A."/>
            <person name="Lucas S."/>
            <person name="Lapidus A."/>
            <person name="Barry K."/>
            <person name="Glavina del Rio T."/>
            <person name="Dalin E."/>
            <person name="Tice H."/>
            <person name="Pitluck S."/>
            <person name="Chertkov O."/>
            <person name="Brettin T."/>
            <person name="Bruce D."/>
            <person name="Detter J.C."/>
            <person name="Han C."/>
            <person name="Schmutz J."/>
            <person name="Larimer F."/>
            <person name="Land M."/>
            <person name="Hauser L."/>
            <person name="Kyrpides N."/>
            <person name="Kim E."/>
            <person name="Zhao J.-S."/>
            <person name="Richardson P."/>
        </authorList>
    </citation>
    <scope>NUCLEOTIDE SEQUENCE [LARGE SCALE GENOMIC DNA]</scope>
    <source>
        <strain>HAW-EB3</strain>
    </source>
</reference>
<proteinExistence type="inferred from homology"/>
<sequence>MAKSKGNREKIKLVSSAKTGHFYTTEKNKRNMPEKMEIKKFDPVIRQHVMYKEAKIK</sequence>
<feature type="chain" id="PRO_0000356663" description="Large ribosomal subunit protein bL33">
    <location>
        <begin position="1"/>
        <end position="57"/>
    </location>
</feature>
<keyword id="KW-1185">Reference proteome</keyword>
<keyword id="KW-0687">Ribonucleoprotein</keyword>
<keyword id="KW-0689">Ribosomal protein</keyword>
<dbReference type="EMBL" id="CP000821">
    <property type="protein sequence ID" value="ABV35000.1"/>
    <property type="molecule type" value="Genomic_DNA"/>
</dbReference>
<dbReference type="RefSeq" id="WP_011494790.1">
    <property type="nucleotide sequence ID" value="NC_009831.1"/>
</dbReference>
<dbReference type="SMR" id="A8FQ77"/>
<dbReference type="STRING" id="425104.Ssed_0387"/>
<dbReference type="KEGG" id="sse:Ssed_0387"/>
<dbReference type="eggNOG" id="COG0267">
    <property type="taxonomic scope" value="Bacteria"/>
</dbReference>
<dbReference type="HOGENOM" id="CLU_190949_1_1_6"/>
<dbReference type="OrthoDB" id="21586at2"/>
<dbReference type="Proteomes" id="UP000002015">
    <property type="component" value="Chromosome"/>
</dbReference>
<dbReference type="GO" id="GO:0022625">
    <property type="term" value="C:cytosolic large ribosomal subunit"/>
    <property type="evidence" value="ECO:0007669"/>
    <property type="project" value="TreeGrafter"/>
</dbReference>
<dbReference type="GO" id="GO:0003735">
    <property type="term" value="F:structural constituent of ribosome"/>
    <property type="evidence" value="ECO:0007669"/>
    <property type="project" value="InterPro"/>
</dbReference>
<dbReference type="GO" id="GO:0006412">
    <property type="term" value="P:translation"/>
    <property type="evidence" value="ECO:0007669"/>
    <property type="project" value="UniProtKB-UniRule"/>
</dbReference>
<dbReference type="FunFam" id="2.20.28.120:FF:000001">
    <property type="entry name" value="50S ribosomal protein L33"/>
    <property type="match status" value="1"/>
</dbReference>
<dbReference type="Gene3D" id="2.20.28.120">
    <property type="entry name" value="Ribosomal protein L33"/>
    <property type="match status" value="1"/>
</dbReference>
<dbReference type="HAMAP" id="MF_00294">
    <property type="entry name" value="Ribosomal_bL33"/>
    <property type="match status" value="1"/>
</dbReference>
<dbReference type="InterPro" id="IPR001705">
    <property type="entry name" value="Ribosomal_bL33"/>
</dbReference>
<dbReference type="InterPro" id="IPR018264">
    <property type="entry name" value="Ribosomal_bL33_CS"/>
</dbReference>
<dbReference type="InterPro" id="IPR038584">
    <property type="entry name" value="Ribosomal_bL33_sf"/>
</dbReference>
<dbReference type="InterPro" id="IPR011332">
    <property type="entry name" value="Ribosomal_zn-bd"/>
</dbReference>
<dbReference type="NCBIfam" id="NF001860">
    <property type="entry name" value="PRK00595.1"/>
    <property type="match status" value="1"/>
</dbReference>
<dbReference type="NCBIfam" id="TIGR01023">
    <property type="entry name" value="rpmG_bact"/>
    <property type="match status" value="1"/>
</dbReference>
<dbReference type="PANTHER" id="PTHR15238">
    <property type="entry name" value="54S RIBOSOMAL PROTEIN L39, MITOCHONDRIAL"/>
    <property type="match status" value="1"/>
</dbReference>
<dbReference type="PANTHER" id="PTHR15238:SF1">
    <property type="entry name" value="LARGE RIBOSOMAL SUBUNIT PROTEIN BL33M"/>
    <property type="match status" value="1"/>
</dbReference>
<dbReference type="Pfam" id="PF00471">
    <property type="entry name" value="Ribosomal_L33"/>
    <property type="match status" value="1"/>
</dbReference>
<dbReference type="SUPFAM" id="SSF57829">
    <property type="entry name" value="Zn-binding ribosomal proteins"/>
    <property type="match status" value="1"/>
</dbReference>
<dbReference type="PROSITE" id="PS00582">
    <property type="entry name" value="RIBOSOMAL_L33"/>
    <property type="match status" value="1"/>
</dbReference>
<organism>
    <name type="scientific">Shewanella sediminis (strain HAW-EB3)</name>
    <dbReference type="NCBI Taxonomy" id="425104"/>
    <lineage>
        <taxon>Bacteria</taxon>
        <taxon>Pseudomonadati</taxon>
        <taxon>Pseudomonadota</taxon>
        <taxon>Gammaproteobacteria</taxon>
        <taxon>Alteromonadales</taxon>
        <taxon>Shewanellaceae</taxon>
        <taxon>Shewanella</taxon>
    </lineage>
</organism>
<gene>
    <name evidence="1" type="primary">rpmG</name>
    <name type="ordered locus">Ssed_0387</name>
</gene>
<evidence type="ECO:0000255" key="1">
    <source>
        <dbReference type="HAMAP-Rule" id="MF_00294"/>
    </source>
</evidence>
<evidence type="ECO:0000305" key="2"/>
<accession>A8FQ77</accession>
<protein>
    <recommendedName>
        <fullName evidence="1">Large ribosomal subunit protein bL33</fullName>
    </recommendedName>
    <alternativeName>
        <fullName evidence="2">50S ribosomal protein L33</fullName>
    </alternativeName>
</protein>
<comment type="similarity">
    <text evidence="1">Belongs to the bacterial ribosomal protein bL33 family.</text>
</comment>
<name>RL33_SHESH</name>